<accession>P52790</accession>
<accession>Q8N1E7</accession>
<reference key="1">
    <citation type="journal article" date="1996" name="Genomics">
        <title>Sequence of human hexokinase III cDNA and assignment of the human hexokinase III gene (HK3) to chromosome band 5q35.2 by fluorescence in situ hybridization.</title>
        <authorList>
            <person name="Furuta H."/>
            <person name="Nishi S."/>
            <person name="Le Beau M.M."/>
            <person name="Fernald A.A."/>
            <person name="Yano H."/>
            <person name="Bell G.I."/>
        </authorList>
    </citation>
    <scope>NUCLEOTIDE SEQUENCE [MRNA]</scope>
    <source>
        <tissue>Liver</tissue>
    </source>
</reference>
<reference key="2">
    <citation type="submission" date="2005-07" db="EMBL/GenBank/DDBJ databases">
        <authorList>
            <person name="Mural R.J."/>
            <person name="Istrail S."/>
            <person name="Sutton G.G."/>
            <person name="Florea L."/>
            <person name="Halpern A.L."/>
            <person name="Mobarry C.M."/>
            <person name="Lippert R."/>
            <person name="Walenz B."/>
            <person name="Shatkay H."/>
            <person name="Dew I."/>
            <person name="Miller J.R."/>
            <person name="Flanigan M.J."/>
            <person name="Edwards N.J."/>
            <person name="Bolanos R."/>
            <person name="Fasulo D."/>
            <person name="Halldorsson B.V."/>
            <person name="Hannenhalli S."/>
            <person name="Turner R."/>
            <person name="Yooseph S."/>
            <person name="Lu F."/>
            <person name="Nusskern D.R."/>
            <person name="Shue B.C."/>
            <person name="Zheng X.H."/>
            <person name="Zhong F."/>
            <person name="Delcher A.L."/>
            <person name="Huson D.H."/>
            <person name="Kravitz S.A."/>
            <person name="Mouchard L."/>
            <person name="Reinert K."/>
            <person name="Remington K.A."/>
            <person name="Clark A.G."/>
            <person name="Waterman M.S."/>
            <person name="Eichler E.E."/>
            <person name="Adams M.D."/>
            <person name="Hunkapiller M.W."/>
            <person name="Myers E.W."/>
            <person name="Venter J.C."/>
        </authorList>
    </citation>
    <scope>NUCLEOTIDE SEQUENCE [LARGE SCALE GENOMIC DNA]</scope>
</reference>
<reference key="3">
    <citation type="journal article" date="2004" name="Genome Res.">
        <title>The status, quality, and expansion of the NIH full-length cDNA project: the Mammalian Gene Collection (MGC).</title>
        <authorList>
            <consortium name="The MGC Project Team"/>
        </authorList>
    </citation>
    <scope>NUCLEOTIDE SEQUENCE [LARGE SCALE MRNA]</scope>
    <source>
        <tissue>Blood</tissue>
    </source>
</reference>
<reference key="4">
    <citation type="journal article" date="1996" name="Mol. Cell. Biochem.">
        <title>Purification and characterization of the carboxyl-domain of human hexokinase type III expressed as fusion protein.</title>
        <authorList>
            <person name="Palma F."/>
            <person name="Agostini D."/>
            <person name="Mason P."/>
            <person name="Dacha M."/>
            <person name="Piccoli G."/>
            <person name="Biagiarelli B."/>
            <person name="Fiorani M."/>
            <person name="Stocchi V."/>
        </authorList>
    </citation>
    <scope>NUCLEOTIDE SEQUENCE [MRNA] OF 358-923</scope>
    <scope>FUNCTION</scope>
    <scope>CATALYTIC ACTIVITY</scope>
    <scope>ACTIVITY REGULATION</scope>
    <source>
        <tissue>Liver</tissue>
    </source>
</reference>
<reference evidence="12" key="5">
    <citation type="submission" date="2009-05" db="PDB data bank">
        <title>Crystal structure of the C-terminal Hexokinase domain of human HK3.</title>
        <authorList>
            <person name="Nedyalkova L."/>
            <person name="Tong Y."/>
            <person name="Rabeh W."/>
            <person name="Tempel W."/>
            <person name="Landry R."/>
            <person name="Arrowsmith C.H."/>
            <person name="Edwards A.M."/>
            <person name="Bountra C."/>
            <person name="Weigelt J."/>
            <person name="Bochkarev A."/>
            <person name="Park H."/>
        </authorList>
    </citation>
    <scope>X-RAY CRYSTALLOGRAPHY (2.80 ANGSTROMS) OF 480-922 IN COMPLEX WITH GLUCOSE</scope>
</reference>
<reference key="6">
    <citation type="journal article" date="2006" name="Science">
        <title>The consensus coding sequences of human breast and colorectal cancers.</title>
        <authorList>
            <person name="Sjoeblom T."/>
            <person name="Jones S."/>
            <person name="Wood L.D."/>
            <person name="Parsons D.W."/>
            <person name="Lin J."/>
            <person name="Barber T.D."/>
            <person name="Mandelker D."/>
            <person name="Leary R.J."/>
            <person name="Ptak J."/>
            <person name="Silliman N."/>
            <person name="Szabo S."/>
            <person name="Buckhaults P."/>
            <person name="Farrell C."/>
            <person name="Meeh P."/>
            <person name="Markowitz S.D."/>
            <person name="Willis J."/>
            <person name="Dawson D."/>
            <person name="Willson J.K.V."/>
            <person name="Gazdar A.F."/>
            <person name="Hartigan J."/>
            <person name="Wu L."/>
            <person name="Liu C."/>
            <person name="Parmigiani G."/>
            <person name="Park B.H."/>
            <person name="Bachman K.E."/>
            <person name="Papadopoulos N."/>
            <person name="Vogelstein B."/>
            <person name="Kinzler K.W."/>
            <person name="Velculescu V.E."/>
        </authorList>
    </citation>
    <scope>VARIANTS [LARGE SCALE ANALYSIS] TRP-480 AND VAL-499</scope>
</reference>
<name>HXK3_HUMAN</name>
<comment type="function">
    <text evidence="6">Catalyzes the phosphorylation of hexose, such as D-glucose and D-fructose, to hexose 6-phosphate (D-glucose 6-phosphate and D-fructose 6-phosphate, respectively) (PubMed:8717435). Mediates the initial step of glycolysis by catalyzing phosphorylation of D-glucose to D-glucose 6-phosphate (PubMed:8717435).</text>
</comment>
<comment type="catalytic activity">
    <reaction evidence="6">
        <text>a D-hexose + ATP = a D-hexose 6-phosphate + ADP + H(+)</text>
        <dbReference type="Rhea" id="RHEA:22740"/>
        <dbReference type="ChEBI" id="CHEBI:4194"/>
        <dbReference type="ChEBI" id="CHEBI:15378"/>
        <dbReference type="ChEBI" id="CHEBI:30616"/>
        <dbReference type="ChEBI" id="CHEBI:229467"/>
        <dbReference type="ChEBI" id="CHEBI:456216"/>
        <dbReference type="EC" id="2.7.1.1"/>
    </reaction>
    <physiologicalReaction direction="left-to-right" evidence="6">
        <dbReference type="Rhea" id="RHEA:22741"/>
    </physiologicalReaction>
</comment>
<comment type="catalytic activity">
    <reaction evidence="2">
        <text>D-fructose + ATP = D-fructose 6-phosphate + ADP + H(+)</text>
        <dbReference type="Rhea" id="RHEA:16125"/>
        <dbReference type="ChEBI" id="CHEBI:15378"/>
        <dbReference type="ChEBI" id="CHEBI:30616"/>
        <dbReference type="ChEBI" id="CHEBI:37721"/>
        <dbReference type="ChEBI" id="CHEBI:61527"/>
        <dbReference type="ChEBI" id="CHEBI:456216"/>
        <dbReference type="EC" id="2.7.1.1"/>
    </reaction>
    <physiologicalReaction direction="left-to-right" evidence="2">
        <dbReference type="Rhea" id="RHEA:16126"/>
    </physiologicalReaction>
</comment>
<comment type="catalytic activity">
    <reaction evidence="6">
        <text>D-glucose + ATP = D-glucose 6-phosphate + ADP + H(+)</text>
        <dbReference type="Rhea" id="RHEA:17825"/>
        <dbReference type="ChEBI" id="CHEBI:4167"/>
        <dbReference type="ChEBI" id="CHEBI:15378"/>
        <dbReference type="ChEBI" id="CHEBI:30616"/>
        <dbReference type="ChEBI" id="CHEBI:61548"/>
        <dbReference type="ChEBI" id="CHEBI:456216"/>
        <dbReference type="EC" id="2.7.1.1"/>
    </reaction>
    <physiologicalReaction direction="left-to-right" evidence="6">
        <dbReference type="Rhea" id="RHEA:17826"/>
    </physiologicalReaction>
</comment>
<comment type="activity regulation">
    <text evidence="6">Hexokinase is an allosteric enzyme inhibited by its product D-glucose 6-phosphate.</text>
</comment>
<comment type="pathway">
    <text evidence="10">Carbohydrate metabolism; hexose metabolism.</text>
</comment>
<comment type="pathway">
    <text evidence="10">Carbohydrate degradation; glycolysis; D-glyceraldehyde 3-phosphate and glycerone phosphate from D-glucose: step 1/4.</text>
</comment>
<comment type="interaction">
    <interactant intactId="EBI-2965780">
        <id>P52790</id>
    </interactant>
    <interactant intactId="EBI-21535880">
        <id>Q92870-2</id>
        <label>APBB2</label>
    </interactant>
    <organismsDiffer>false</organismsDiffer>
    <experiments>3</experiments>
</comment>
<comment type="interaction">
    <interactant intactId="EBI-2965780">
        <id>P52790</id>
    </interactant>
    <interactant intactId="EBI-11954292">
        <id>Q86V38</id>
        <label>ATN1</label>
    </interactant>
    <organismsDiffer>false</organismsDiffer>
    <experiments>3</experiments>
</comment>
<comment type="interaction">
    <interactant intactId="EBI-2965780">
        <id>P52790</id>
    </interactant>
    <interactant intactId="EBI-355710">
        <id>P48643</id>
        <label>CCT5</label>
    </interactant>
    <organismsDiffer>false</organismsDiffer>
    <experiments>3</experiments>
</comment>
<comment type="interaction">
    <interactant intactId="EBI-2965780">
        <id>P52790</id>
    </interactant>
    <interactant intactId="EBI-10968534">
        <id>P50570-2</id>
        <label>DNM2</label>
    </interactant>
    <organismsDiffer>false</organismsDiffer>
    <experiments>3</experiments>
</comment>
<comment type="interaction">
    <interactant intactId="EBI-2965780">
        <id>P52790</id>
    </interactant>
    <interactant intactId="EBI-466029">
        <id>P42858</id>
        <label>HTT</label>
    </interactant>
    <organismsDiffer>false</organismsDiffer>
    <experiments>3</experiments>
</comment>
<comment type="interaction">
    <interactant intactId="EBI-2965780">
        <id>P52790</id>
    </interactant>
    <interactant intactId="EBI-2432309">
        <id>Q92876</id>
        <label>KLK6</label>
    </interactant>
    <organismsDiffer>false</organismsDiffer>
    <experiments>3</experiments>
</comment>
<comment type="interaction">
    <interactant intactId="EBI-2965780">
        <id>P52790</id>
    </interactant>
    <interactant intactId="EBI-16439278">
        <id>Q6FHY5</id>
        <label>MEOX2</label>
    </interactant>
    <organismsDiffer>false</organismsDiffer>
    <experiments>3</experiments>
</comment>
<comment type="interaction">
    <interactant intactId="EBI-2965780">
        <id>P52790</id>
    </interactant>
    <interactant intactId="EBI-749195">
        <id>P60891</id>
        <label>PRPS1</label>
    </interactant>
    <organismsDiffer>false</organismsDiffer>
    <experiments>3</experiments>
</comment>
<comment type="interaction">
    <interactant intactId="EBI-2965780">
        <id>P52790</id>
    </interactant>
    <interactant intactId="EBI-396669">
        <id>Q9Y3C5</id>
        <label>RNF11</label>
    </interactant>
    <organismsDiffer>false</organismsDiffer>
    <experiments>3</experiments>
</comment>
<comment type="interaction">
    <interactant intactId="EBI-2965780">
        <id>P52790</id>
    </interactant>
    <interactant intactId="EBI-720609">
        <id>O76024</id>
        <label>WFS1</label>
    </interactant>
    <organismsDiffer>false</organismsDiffer>
    <experiments>3</experiments>
</comment>
<comment type="domain">
    <text evidence="1">The N- and C-terminal halves of this hexokinase contain a hexokinase domain. The catalytic activity is associated with the C-terminus while regulatory function is associated with the N-terminus.</text>
</comment>
<comment type="similarity">
    <text evidence="3 9">Belongs to the hexokinase family.</text>
</comment>
<comment type="online information" name="Wikipedia">
    <link uri="https://en.wikipedia.org/wiki/Hexokinase"/>
    <text>Hexokinase entry</text>
</comment>
<protein>
    <recommendedName>
        <fullName evidence="9">Hexokinase-3</fullName>
        <ecNumber evidence="6">2.7.1.1</ecNumber>
    </recommendedName>
    <alternativeName>
        <fullName evidence="8">Hexokinase type III</fullName>
        <shortName evidence="8">HK III</shortName>
    </alternativeName>
    <alternativeName>
        <fullName evidence="2">Hexokinase-C</fullName>
    </alternativeName>
</protein>
<dbReference type="EC" id="2.7.1.1" evidence="6"/>
<dbReference type="EMBL" id="U51333">
    <property type="protein sequence ID" value="AAC50732.1"/>
    <property type="molecule type" value="mRNA"/>
</dbReference>
<dbReference type="EMBL" id="CH471195">
    <property type="protein sequence ID" value="EAW85048.1"/>
    <property type="molecule type" value="Genomic_DNA"/>
</dbReference>
<dbReference type="EMBL" id="BC028129">
    <property type="protein sequence ID" value="AAH28129.1"/>
    <property type="molecule type" value="mRNA"/>
</dbReference>
<dbReference type="EMBL" id="U42303">
    <property type="protein sequence ID" value="AAC50422.1"/>
    <property type="molecule type" value="mRNA"/>
</dbReference>
<dbReference type="CCDS" id="CCDS4407.1"/>
<dbReference type="RefSeq" id="NP_002106.2">
    <property type="nucleotide sequence ID" value="NM_002115.3"/>
</dbReference>
<dbReference type="PDB" id="3HM8">
    <property type="method" value="X-ray"/>
    <property type="resolution" value="2.80 A"/>
    <property type="chains" value="A/B/C/D=480-922"/>
</dbReference>
<dbReference type="PDBsum" id="3HM8"/>
<dbReference type="SMR" id="P52790"/>
<dbReference type="BioGRID" id="109348">
    <property type="interactions" value="35"/>
</dbReference>
<dbReference type="FunCoup" id="P52790">
    <property type="interactions" value="432"/>
</dbReference>
<dbReference type="IntAct" id="P52790">
    <property type="interactions" value="39"/>
</dbReference>
<dbReference type="MINT" id="P52790"/>
<dbReference type="STRING" id="9606.ENSP00000292432"/>
<dbReference type="ChEMBL" id="CHEMBL2709"/>
<dbReference type="iPTMnet" id="P52790"/>
<dbReference type="PhosphoSitePlus" id="P52790"/>
<dbReference type="SwissPalm" id="P52790"/>
<dbReference type="BioMuta" id="HK3"/>
<dbReference type="DMDM" id="206729871"/>
<dbReference type="jPOST" id="P52790"/>
<dbReference type="MassIVE" id="P52790"/>
<dbReference type="PaxDb" id="9606-ENSP00000292432"/>
<dbReference type="PeptideAtlas" id="P52790"/>
<dbReference type="PRIDE" id="P52790"/>
<dbReference type="ProteomicsDB" id="56534"/>
<dbReference type="Antibodypedia" id="29158">
    <property type="antibodies" value="451 antibodies from 35 providers"/>
</dbReference>
<dbReference type="DNASU" id="3101"/>
<dbReference type="Ensembl" id="ENST00000292432.10">
    <property type="protein sequence ID" value="ENSP00000292432.5"/>
    <property type="gene ID" value="ENSG00000160883.11"/>
</dbReference>
<dbReference type="GeneID" id="3101"/>
<dbReference type="KEGG" id="hsa:3101"/>
<dbReference type="MANE-Select" id="ENST00000292432.10">
    <property type="protein sequence ID" value="ENSP00000292432.5"/>
    <property type="RefSeq nucleotide sequence ID" value="NM_002115.3"/>
    <property type="RefSeq protein sequence ID" value="NP_002106.2"/>
</dbReference>
<dbReference type="UCSC" id="uc003mfa.4">
    <property type="organism name" value="human"/>
</dbReference>
<dbReference type="AGR" id="HGNC:4925"/>
<dbReference type="CTD" id="3101"/>
<dbReference type="DisGeNET" id="3101"/>
<dbReference type="GeneCards" id="HK3"/>
<dbReference type="HGNC" id="HGNC:4925">
    <property type="gene designation" value="HK3"/>
</dbReference>
<dbReference type="HPA" id="ENSG00000160883">
    <property type="expression patterns" value="Group enriched (bone marrow, lymphoid tissue)"/>
</dbReference>
<dbReference type="MalaCards" id="HK3"/>
<dbReference type="MIM" id="142570">
    <property type="type" value="gene"/>
</dbReference>
<dbReference type="neXtProt" id="NX_P52790"/>
<dbReference type="OpenTargets" id="ENSG00000160883"/>
<dbReference type="PharmGKB" id="PA29303"/>
<dbReference type="VEuPathDB" id="HostDB:ENSG00000160883"/>
<dbReference type="eggNOG" id="KOG1369">
    <property type="taxonomic scope" value="Eukaryota"/>
</dbReference>
<dbReference type="GeneTree" id="ENSGT00950000182787"/>
<dbReference type="HOGENOM" id="CLU_014393_1_0_1"/>
<dbReference type="InParanoid" id="P52790"/>
<dbReference type="OMA" id="VRPCEVG"/>
<dbReference type="OrthoDB" id="419537at2759"/>
<dbReference type="PAN-GO" id="P52790">
    <property type="GO annotations" value="9 GO annotations based on evolutionary models"/>
</dbReference>
<dbReference type="PhylomeDB" id="P52790"/>
<dbReference type="TreeFam" id="TF314238"/>
<dbReference type="BioCyc" id="MetaCyc:HS08548-MONOMER"/>
<dbReference type="BRENDA" id="2.7.1.1">
    <property type="organism ID" value="2681"/>
</dbReference>
<dbReference type="PathwayCommons" id="P52790"/>
<dbReference type="Reactome" id="R-HSA-6798695">
    <property type="pathway name" value="Neutrophil degranulation"/>
</dbReference>
<dbReference type="Reactome" id="R-HSA-70171">
    <property type="pathway name" value="Glycolysis"/>
</dbReference>
<dbReference type="SABIO-RK" id="P52790"/>
<dbReference type="SignaLink" id="P52790"/>
<dbReference type="SIGNOR" id="P52790"/>
<dbReference type="UniPathway" id="UPA00109">
    <property type="reaction ID" value="UER00180"/>
</dbReference>
<dbReference type="UniPathway" id="UPA00242"/>
<dbReference type="BioGRID-ORCS" id="3101">
    <property type="hits" value="12 hits in 1150 CRISPR screens"/>
</dbReference>
<dbReference type="EvolutionaryTrace" id="P52790"/>
<dbReference type="GeneWiki" id="HK3"/>
<dbReference type="GenomeRNAi" id="3101"/>
<dbReference type="Pharos" id="P52790">
    <property type="development level" value="Tbio"/>
</dbReference>
<dbReference type="PRO" id="PR:P52790"/>
<dbReference type="Proteomes" id="UP000005640">
    <property type="component" value="Chromosome 5"/>
</dbReference>
<dbReference type="RNAct" id="P52790">
    <property type="molecule type" value="protein"/>
</dbReference>
<dbReference type="Bgee" id="ENSG00000160883">
    <property type="expression patterns" value="Expressed in monocyte and 103 other cell types or tissues"/>
</dbReference>
<dbReference type="ExpressionAtlas" id="P52790">
    <property type="expression patterns" value="baseline and differential"/>
</dbReference>
<dbReference type="GO" id="GO:0005829">
    <property type="term" value="C:cytosol"/>
    <property type="evidence" value="ECO:0000318"/>
    <property type="project" value="GO_Central"/>
</dbReference>
<dbReference type="GO" id="GO:0005576">
    <property type="term" value="C:extracellular region"/>
    <property type="evidence" value="ECO:0000304"/>
    <property type="project" value="Reactome"/>
</dbReference>
<dbReference type="GO" id="GO:1904813">
    <property type="term" value="C:ficolin-1-rich granule lumen"/>
    <property type="evidence" value="ECO:0000304"/>
    <property type="project" value="Reactome"/>
</dbReference>
<dbReference type="GO" id="GO:0005739">
    <property type="term" value="C:mitochondrion"/>
    <property type="evidence" value="ECO:0000318"/>
    <property type="project" value="GO_Central"/>
</dbReference>
<dbReference type="GO" id="GO:0034774">
    <property type="term" value="C:secretory granule lumen"/>
    <property type="evidence" value="ECO:0000304"/>
    <property type="project" value="Reactome"/>
</dbReference>
<dbReference type="GO" id="GO:0005524">
    <property type="term" value="F:ATP binding"/>
    <property type="evidence" value="ECO:0007669"/>
    <property type="project" value="UniProtKB-KW"/>
</dbReference>
<dbReference type="GO" id="GO:0005536">
    <property type="term" value="F:D-glucose binding"/>
    <property type="evidence" value="ECO:0007669"/>
    <property type="project" value="InterPro"/>
</dbReference>
<dbReference type="GO" id="GO:0008865">
    <property type="term" value="F:fructokinase activity"/>
    <property type="evidence" value="ECO:0000250"/>
    <property type="project" value="UniProtKB"/>
</dbReference>
<dbReference type="GO" id="GO:0004340">
    <property type="term" value="F:glucokinase activity"/>
    <property type="evidence" value="ECO:0000250"/>
    <property type="project" value="UniProtKB"/>
</dbReference>
<dbReference type="GO" id="GO:0004396">
    <property type="term" value="F:hexokinase activity"/>
    <property type="evidence" value="ECO:0000314"/>
    <property type="project" value="MGI"/>
</dbReference>
<dbReference type="GO" id="GO:0019158">
    <property type="term" value="F:mannokinase activity"/>
    <property type="evidence" value="ECO:0000318"/>
    <property type="project" value="GO_Central"/>
</dbReference>
<dbReference type="GO" id="GO:0061621">
    <property type="term" value="P:canonical glycolysis"/>
    <property type="evidence" value="ECO:0000304"/>
    <property type="project" value="Reactome"/>
</dbReference>
<dbReference type="GO" id="GO:0006002">
    <property type="term" value="P:fructose 6-phosphate metabolic process"/>
    <property type="evidence" value="ECO:0000250"/>
    <property type="project" value="UniProtKB"/>
</dbReference>
<dbReference type="GO" id="GO:0051156">
    <property type="term" value="P:glucose 6-phosphate metabolic process"/>
    <property type="evidence" value="ECO:0000250"/>
    <property type="project" value="UniProtKB"/>
</dbReference>
<dbReference type="GO" id="GO:0006006">
    <property type="term" value="P:glucose metabolic process"/>
    <property type="evidence" value="ECO:0000318"/>
    <property type="project" value="GO_Central"/>
</dbReference>
<dbReference type="GO" id="GO:0006096">
    <property type="term" value="P:glycolytic process"/>
    <property type="evidence" value="ECO:0000318"/>
    <property type="project" value="GO_Central"/>
</dbReference>
<dbReference type="GO" id="GO:0001678">
    <property type="term" value="P:intracellular glucose homeostasis"/>
    <property type="evidence" value="ECO:0000318"/>
    <property type="project" value="GO_Central"/>
</dbReference>
<dbReference type="CDD" id="cd24091">
    <property type="entry name" value="ASKHA_NBD_HK1-3_meta_rpt2"/>
    <property type="match status" value="1"/>
</dbReference>
<dbReference type="CDD" id="cd24090">
    <property type="entry name" value="ASKHA_NBD_HK3_meta_rpt1"/>
    <property type="match status" value="1"/>
</dbReference>
<dbReference type="FunFam" id="3.30.420.40:FF:000015">
    <property type="entry name" value="Hexokinase 1"/>
    <property type="match status" value="1"/>
</dbReference>
<dbReference type="FunFam" id="3.40.367.20:FF:000001">
    <property type="entry name" value="Hexokinase 1"/>
    <property type="match status" value="1"/>
</dbReference>
<dbReference type="FunFam" id="3.30.420.40:FF:000123">
    <property type="entry name" value="Hexokinase 3"/>
    <property type="match status" value="1"/>
</dbReference>
<dbReference type="FunFam" id="3.40.367.20:FF:000005">
    <property type="entry name" value="Phosphotransferase"/>
    <property type="match status" value="1"/>
</dbReference>
<dbReference type="Gene3D" id="3.30.420.40">
    <property type="match status" value="2"/>
</dbReference>
<dbReference type="Gene3D" id="3.40.367.20">
    <property type="match status" value="2"/>
</dbReference>
<dbReference type="InterPro" id="IPR043129">
    <property type="entry name" value="ATPase_NBD"/>
</dbReference>
<dbReference type="InterPro" id="IPR001312">
    <property type="entry name" value="Hexokinase"/>
</dbReference>
<dbReference type="InterPro" id="IPR019807">
    <property type="entry name" value="Hexokinase_BS"/>
</dbReference>
<dbReference type="InterPro" id="IPR022673">
    <property type="entry name" value="Hexokinase_C"/>
</dbReference>
<dbReference type="InterPro" id="IPR022672">
    <property type="entry name" value="Hexokinase_N"/>
</dbReference>
<dbReference type="PANTHER" id="PTHR19443">
    <property type="entry name" value="HEXOKINASE"/>
    <property type="match status" value="1"/>
</dbReference>
<dbReference type="PANTHER" id="PTHR19443:SF1">
    <property type="entry name" value="HEXOKINASE-3"/>
    <property type="match status" value="1"/>
</dbReference>
<dbReference type="Pfam" id="PF00349">
    <property type="entry name" value="Hexokinase_1"/>
    <property type="match status" value="2"/>
</dbReference>
<dbReference type="Pfam" id="PF03727">
    <property type="entry name" value="Hexokinase_2"/>
    <property type="match status" value="2"/>
</dbReference>
<dbReference type="PRINTS" id="PR00475">
    <property type="entry name" value="HEXOKINASE"/>
</dbReference>
<dbReference type="SUPFAM" id="SSF53067">
    <property type="entry name" value="Actin-like ATPase domain"/>
    <property type="match status" value="4"/>
</dbReference>
<dbReference type="PROSITE" id="PS00378">
    <property type="entry name" value="HEXOKINASE_1"/>
    <property type="match status" value="1"/>
</dbReference>
<dbReference type="PROSITE" id="PS51748">
    <property type="entry name" value="HEXOKINASE_2"/>
    <property type="match status" value="2"/>
</dbReference>
<organism>
    <name type="scientific">Homo sapiens</name>
    <name type="common">Human</name>
    <dbReference type="NCBI Taxonomy" id="9606"/>
    <lineage>
        <taxon>Eukaryota</taxon>
        <taxon>Metazoa</taxon>
        <taxon>Chordata</taxon>
        <taxon>Craniata</taxon>
        <taxon>Vertebrata</taxon>
        <taxon>Euteleostomi</taxon>
        <taxon>Mammalia</taxon>
        <taxon>Eutheria</taxon>
        <taxon>Euarchontoglires</taxon>
        <taxon>Primates</taxon>
        <taxon>Haplorrhini</taxon>
        <taxon>Catarrhini</taxon>
        <taxon>Hominidae</taxon>
        <taxon>Homo</taxon>
    </lineage>
</organism>
<proteinExistence type="evidence at protein level"/>
<sequence>MDSIGSSGLRQGEETLSCSEEGLPGPSDSSELVQECLQQFKVTRAQLQQIQASLLGSMEQALRGQASPAPAVRMLPTYVGSTPHGTEQGDFVVLELGATGASLRVLWVTLTGIEGHRVEPRSQEFVIPQEVMLGAGQQLFDFAAHCLSEFLDAQPVNKQGLQLGFSFSFPCHQTGLDRSTLISWTKGFRCSGVEGQDVVQLLRDAIRRQGAYNIDVVAVVNDTVGTMMGCEPGVRPCEVGLVVDTGTNACYMEEARHVAVLDEDRGRVCVSVEWGSFSDDGALGPVLTTFDHTLDHESLNPGAQRFEKMIGGLYLGELVRLVLAHLARCGVLFGGCTSPALLSQGSILLEHVAEMEDPSTGAARVHAILQDLGLSPGASDVELVQHVCAAVCTRAAQLCAAALAAVLSCLQHSREQQTLQVAVATGGRVCERHPRFCSVLQGTVMLLAPECDVSLIPSVDGGGRGVAMVTAVAARLAAHRRLLEETLAPFRLNHDQLAAVQAQMRKAMAKGLRGEASSLRMLPTFVRATPDGSERGDFLALDLGGTNFRVLLVRVTTGVQITSEIYSIPETVAQGSGQQLFDHIVDCIVDFQQKQGLSGQSLPLGFTFSFPCRQLGLDQGILLNWTKGFKASDCEGQDVVSLLREAITRRQAVELNVVAIVNDTVGTMMSCGYEDPRCEIGLIVGTGTNACYMEELRNVAGVPGDSGRMCINMEWGAFGDDGSLAMLSTRFDASVDQASINPGKQRFEKMISGMYLGEIVRHILLHLTSLGVLFRGQQIQRLQTRDIFKTKFLSEIESDSLALRQVRAILEDLGLPLTSDDALMVLEVCQAVSQRAAQLCGAGVAAVVEKIRENRGLEELAVSVGVDGTLYKLHPRFSSLVAATVRELAPRCVVTFLQSEDGSGKGAALVTAVACRLAQLTRV</sequence>
<evidence type="ECO:0000250" key="1">
    <source>
        <dbReference type="UniProtKB" id="P19367"/>
    </source>
</evidence>
<evidence type="ECO:0000250" key="2">
    <source>
        <dbReference type="UniProtKB" id="P27926"/>
    </source>
</evidence>
<evidence type="ECO:0000255" key="3">
    <source>
        <dbReference type="PROSITE-ProRule" id="PRU01084"/>
    </source>
</evidence>
<evidence type="ECO:0000256" key="4">
    <source>
        <dbReference type="SAM" id="MobiDB-lite"/>
    </source>
</evidence>
<evidence type="ECO:0000269" key="5">
    <source>
    </source>
</evidence>
<evidence type="ECO:0000269" key="6">
    <source>
    </source>
</evidence>
<evidence type="ECO:0000269" key="7">
    <source ref="5"/>
</evidence>
<evidence type="ECO:0000303" key="8">
    <source>
    </source>
</evidence>
<evidence type="ECO:0000305" key="9"/>
<evidence type="ECO:0000305" key="10">
    <source>
    </source>
</evidence>
<evidence type="ECO:0000312" key="11">
    <source>
        <dbReference type="HGNC" id="HGNC:4925"/>
    </source>
</evidence>
<evidence type="ECO:0007744" key="12">
    <source>
        <dbReference type="PDB" id="3HM8"/>
    </source>
</evidence>
<evidence type="ECO:0007829" key="13">
    <source>
        <dbReference type="PDB" id="3HM8"/>
    </source>
</evidence>
<feature type="chain" id="PRO_0000197590" description="Hexokinase-3">
    <location>
        <begin position="1"/>
        <end position="923"/>
    </location>
</feature>
<feature type="domain" description="Hexokinase 1" evidence="3">
    <location>
        <begin position="27"/>
        <end position="471"/>
    </location>
</feature>
<feature type="domain" description="Hexokinase 2" evidence="3">
    <location>
        <begin position="477"/>
        <end position="912"/>
    </location>
</feature>
<feature type="region of interest" description="Disordered" evidence="4">
    <location>
        <begin position="1"/>
        <end position="30"/>
    </location>
</feature>
<feature type="region of interest" description="Hexokinase small subdomain 1" evidence="3">
    <location>
        <begin position="84"/>
        <end position="220"/>
    </location>
</feature>
<feature type="region of interest" description="Hexokinase large subdomain 1" evidence="3">
    <location>
        <begin position="221"/>
        <end position="460"/>
    </location>
</feature>
<feature type="region of interest" description="Hexokinase small subdomain 2" evidence="3">
    <location>
        <begin position="531"/>
        <end position="661"/>
    </location>
</feature>
<feature type="region of interest" description="Hexokinase large subdomain 2" evidence="3">
    <location>
        <begin position="662"/>
        <end position="901"/>
    </location>
</feature>
<feature type="compositionally biased region" description="Polar residues" evidence="4">
    <location>
        <begin position="1"/>
        <end position="18"/>
    </location>
</feature>
<feature type="binding site" evidence="1">
    <location>
        <begin position="95"/>
        <end position="104"/>
    </location>
    <ligand>
        <name>D-glucose 6-phosphate</name>
        <dbReference type="ChEBI" id="CHEBI:61548"/>
        <label>1</label>
    </ligand>
</feature>
<feature type="binding site" evidence="1">
    <location>
        <begin position="95"/>
        <end position="102"/>
    </location>
    <ligand>
        <name>ATP</name>
        <dbReference type="ChEBI" id="CHEBI:30616"/>
        <label>1</label>
    </ligand>
</feature>
<feature type="binding site" evidence="1">
    <location>
        <position position="168"/>
    </location>
    <ligand>
        <name>D-glucose</name>
        <dbReference type="ChEBI" id="CHEBI:4167"/>
        <label>1</label>
    </ligand>
</feature>
<feature type="binding site" evidence="1">
    <location>
        <begin position="185"/>
        <end position="186"/>
    </location>
    <ligand>
        <name>D-glucose</name>
        <dbReference type="ChEBI" id="CHEBI:4167"/>
        <label>1</label>
    </ligand>
</feature>
<feature type="binding site" evidence="1">
    <location>
        <begin position="221"/>
        <end position="222"/>
    </location>
    <ligand>
        <name>D-glucose</name>
        <dbReference type="ChEBI" id="CHEBI:4167"/>
        <label>1</label>
    </ligand>
</feature>
<feature type="binding site" evidence="1">
    <location>
        <position position="222"/>
    </location>
    <ligand>
        <name>D-glucose 6-phosphate</name>
        <dbReference type="ChEBI" id="CHEBI:61548"/>
        <label>1</label>
    </ligand>
</feature>
<feature type="binding site" evidence="1">
    <location>
        <position position="245"/>
    </location>
    <ligand>
        <name>D-glucose 6-phosphate</name>
        <dbReference type="ChEBI" id="CHEBI:61548"/>
        <label>1</label>
    </ligand>
</feature>
<feature type="binding site" evidence="1">
    <location>
        <position position="248"/>
    </location>
    <ligand>
        <name>D-glucose</name>
        <dbReference type="ChEBI" id="CHEBI:4167"/>
        <label>1</label>
    </ligand>
</feature>
<feature type="binding site" evidence="1">
    <location>
        <position position="273"/>
    </location>
    <ligand>
        <name>D-glucose</name>
        <dbReference type="ChEBI" id="CHEBI:4167"/>
        <label>1</label>
    </ligand>
</feature>
<feature type="binding site" evidence="1">
    <location>
        <begin position="304"/>
        <end position="307"/>
    </location>
    <ligand>
        <name>D-glucose</name>
        <dbReference type="ChEBI" id="CHEBI:4167"/>
        <label>1</label>
    </ligand>
</feature>
<feature type="binding site" evidence="1">
    <location>
        <begin position="426"/>
        <end position="428"/>
    </location>
    <ligand>
        <name>D-glucose 6-phosphate</name>
        <dbReference type="ChEBI" id="CHEBI:61548"/>
        <label>1</label>
    </ligand>
</feature>
<feature type="binding site" evidence="1">
    <location>
        <begin position="438"/>
        <end position="439"/>
    </location>
    <ligand>
        <name>ATP</name>
        <dbReference type="ChEBI" id="CHEBI:30616"/>
        <label>1</label>
    </ligand>
</feature>
<feature type="binding site" evidence="1">
    <location>
        <begin position="542"/>
        <end position="547"/>
    </location>
    <ligand>
        <name>ATP</name>
        <dbReference type="ChEBI" id="CHEBI:30616"/>
        <label>2</label>
    </ligand>
</feature>
<feature type="binding site" evidence="1">
    <location>
        <begin position="542"/>
        <end position="546"/>
    </location>
    <ligand>
        <name>D-glucose 6-phosphate</name>
        <dbReference type="ChEBI" id="CHEBI:61548"/>
        <label>2</label>
    </ligand>
</feature>
<feature type="binding site" evidence="1">
    <location>
        <begin position="609"/>
        <end position="610"/>
    </location>
    <ligand>
        <name>D-glucose</name>
        <dbReference type="ChEBI" id="CHEBI:4167"/>
        <label>2</label>
    </ligand>
</feature>
<feature type="binding site" evidence="7 12">
    <location>
        <begin position="626"/>
        <end position="627"/>
    </location>
    <ligand>
        <name>D-glucose</name>
        <dbReference type="ChEBI" id="CHEBI:4167"/>
        <label>2</label>
    </ligand>
</feature>
<feature type="binding site" evidence="7 12">
    <location>
        <begin position="662"/>
        <end position="663"/>
    </location>
    <ligand>
        <name>D-glucose</name>
        <dbReference type="ChEBI" id="CHEBI:4167"/>
        <label>2</label>
    </ligand>
</feature>
<feature type="binding site" evidence="1">
    <location>
        <position position="663"/>
    </location>
    <ligand>
        <name>D-glucose 6-phosphate</name>
        <dbReference type="ChEBI" id="CHEBI:61548"/>
        <label>2</label>
    </ligand>
</feature>
<feature type="binding site" evidence="1">
    <location>
        <position position="686"/>
    </location>
    <ligand>
        <name>ATP</name>
        <dbReference type="ChEBI" id="CHEBI:30616"/>
        <label>2</label>
    </ligand>
</feature>
<feature type="binding site" evidence="1">
    <location>
        <position position="686"/>
    </location>
    <ligand>
        <name>D-glucose 6-phosphate</name>
        <dbReference type="ChEBI" id="CHEBI:61548"/>
        <label>2</label>
    </ligand>
</feature>
<feature type="binding site" evidence="7 12">
    <location>
        <begin position="688"/>
        <end position="689"/>
    </location>
    <ligand>
        <name>D-glucose</name>
        <dbReference type="ChEBI" id="CHEBI:4167"/>
        <label>2</label>
    </ligand>
</feature>
<feature type="binding site" evidence="7 12">
    <location>
        <position position="714"/>
    </location>
    <ligand>
        <name>D-glucose</name>
        <dbReference type="ChEBI" id="CHEBI:4167"/>
        <label>2</label>
    </ligand>
</feature>
<feature type="binding site" evidence="7 12">
    <location>
        <position position="748"/>
    </location>
    <ligand>
        <name>D-glucose</name>
        <dbReference type="ChEBI" id="CHEBI:4167"/>
        <label>2</label>
    </ligand>
</feature>
<feature type="binding site" evidence="1">
    <location>
        <begin position="753"/>
        <end position="754"/>
    </location>
    <ligand>
        <name>ATP</name>
        <dbReference type="ChEBI" id="CHEBI:30616"/>
        <label>2</label>
    </ligand>
</feature>
<feature type="binding site" evidence="1">
    <location>
        <begin position="790"/>
        <end position="794"/>
    </location>
    <ligand>
        <name>ATP</name>
        <dbReference type="ChEBI" id="CHEBI:30616"/>
        <label>2</label>
    </ligand>
</feature>
<feature type="binding site" evidence="1">
    <location>
        <begin position="867"/>
        <end position="869"/>
    </location>
    <ligand>
        <name>D-glucose 6-phosphate</name>
        <dbReference type="ChEBI" id="CHEBI:61548"/>
        <label>2</label>
    </ligand>
</feature>
<feature type="binding site" evidence="1">
    <location>
        <begin position="869"/>
        <end position="873"/>
    </location>
    <ligand>
        <name>ATP</name>
        <dbReference type="ChEBI" id="CHEBI:30616"/>
        <label>2</label>
    </ligand>
</feature>
<feature type="binding site" evidence="1">
    <location>
        <position position="903"/>
    </location>
    <ligand>
        <name>D-glucose 6-phosphate</name>
        <dbReference type="ChEBI" id="CHEBI:61548"/>
        <label>2</label>
    </ligand>
</feature>
<feature type="sequence variant" id="VAR_034004" description="In dbSNP:rs35610191.">
    <original>G</original>
    <variation>R</variation>
    <location>
        <position position="281"/>
    </location>
</feature>
<feature type="sequence variant" id="VAR_036186" description="In a colorectal cancer sample; somatic mutation; dbSNP:rs376532514." evidence="5">
    <original>R</original>
    <variation>W</variation>
    <location>
        <position position="480"/>
    </location>
</feature>
<feature type="sequence variant" id="VAR_036187" description="In a breast cancer sample; somatic mutation; dbSNP:rs755546220." evidence="5">
    <original>A</original>
    <variation>V</variation>
    <location>
        <position position="499"/>
    </location>
</feature>
<feature type="sequence conflict" description="In Ref. 1; AAC50732." evidence="9" ref="1">
    <original>F</original>
    <variation>L</variation>
    <location>
        <position position="277"/>
    </location>
</feature>
<feature type="sequence conflict" description="In Ref. 4; AAC50422." evidence="9" ref="4">
    <original>Q</original>
    <variation>L</variation>
    <location>
        <position position="420"/>
    </location>
</feature>
<feature type="sequence conflict" description="In Ref. 4; AAC50422." evidence="9" ref="4">
    <original>E</original>
    <variation>Q</variation>
    <location>
        <position position="431"/>
    </location>
</feature>
<feature type="sequence conflict" description="In Ref. 4; AAC50422." evidence="9" ref="4">
    <original>V</original>
    <variation>I</variation>
    <location>
        <position position="439"/>
    </location>
</feature>
<feature type="sequence conflict" description="In Ref. 4; AAC50422." evidence="9" ref="4">
    <original>K</original>
    <variation>R</variation>
    <location>
        <position position="510"/>
    </location>
</feature>
<feature type="sequence conflict" description="In Ref. 4; AAC50422." evidence="9" ref="4">
    <original>LR</original>
    <variation>SE</variation>
    <location>
        <begin position="512"/>
        <end position="513"/>
    </location>
</feature>
<feature type="sequence conflict" description="In Ref. 4; AAC50422." evidence="9" ref="4">
    <original>A</original>
    <variation>S</variation>
    <location>
        <position position="516"/>
    </location>
</feature>
<feature type="sequence conflict" description="In Ref. 4; AAC50422." evidence="9" ref="4">
    <original>L</original>
    <variation>S</variation>
    <location>
        <position position="519"/>
    </location>
</feature>
<feature type="sequence conflict" description="In Ref. 4; AAC50422." evidence="9" ref="4">
    <original>PD</original>
    <variation>LT</variation>
    <location>
        <begin position="530"/>
        <end position="531"/>
    </location>
</feature>
<feature type="sequence conflict" description="In Ref. 4; AAC50422." evidence="9" ref="4">
    <original>GQ</original>
    <variation>AE</variation>
    <location>
        <begin position="577"/>
        <end position="578"/>
    </location>
</feature>
<feature type="sequence conflict" description="In Ref. 4; AAC50422." evidence="9" ref="4">
    <original>L</original>
    <variation>T</variation>
    <location>
        <position position="604"/>
    </location>
</feature>
<feature type="sequence conflict" description="In Ref. 4; AAC50422." evidence="9" ref="4">
    <original>R</original>
    <variation>H</variation>
    <location>
        <position position="708"/>
    </location>
</feature>
<feature type="sequence conflict" description="In Ref. 4; AAC50422." evidence="9" ref="4">
    <original>F</original>
    <variation>L</variation>
    <location>
        <position position="718"/>
    </location>
</feature>
<feature type="sequence conflict" description="In Ref. 4; AAC50422." evidence="9" ref="4">
    <original>S</original>
    <variation>R</variation>
    <location>
        <position position="728"/>
    </location>
</feature>
<feature type="sequence conflict" description="In Ref. 4; AAC50422." evidence="9" ref="4">
    <original>M</original>
    <variation>I</variation>
    <location>
        <position position="750"/>
    </location>
</feature>
<feature type="sequence conflict" description="In Ref. 4; AAC50422." evidence="9" ref="4">
    <original>A</original>
    <variation>V</variation>
    <location>
        <position position="831"/>
    </location>
</feature>
<feature type="sequence conflict" description="In Ref. 4; AAC50422." evidence="9" ref="4">
    <original>A</original>
    <variation>P</variation>
    <location>
        <position position="836"/>
    </location>
</feature>
<feature type="sequence conflict" description="In Ref. 1; AAC50732." evidence="9" ref="1">
    <original>E</original>
    <variation>G</variation>
    <location>
        <position position="853"/>
    </location>
</feature>
<feature type="sequence conflict" description="In Ref. 4; AAC50422." evidence="9" ref="4">
    <original>A</original>
    <variation>T</variation>
    <location>
        <position position="918"/>
    </location>
</feature>
<feature type="helix" evidence="13">
    <location>
        <begin position="480"/>
        <end position="487"/>
    </location>
</feature>
<feature type="helix" evidence="13">
    <location>
        <begin position="488"/>
        <end position="490"/>
    </location>
</feature>
<feature type="helix" evidence="13">
    <location>
        <begin position="494"/>
        <end position="513"/>
    </location>
</feature>
<feature type="strand" evidence="13">
    <location>
        <begin position="536"/>
        <end position="566"/>
    </location>
</feature>
<feature type="helix" evidence="13">
    <location>
        <begin position="570"/>
        <end position="573"/>
    </location>
</feature>
<feature type="helix" evidence="13">
    <location>
        <begin position="577"/>
        <end position="595"/>
    </location>
</feature>
<feature type="strand" evidence="13">
    <location>
        <begin position="604"/>
        <end position="608"/>
    </location>
</feature>
<feature type="helix" evidence="13">
    <location>
        <begin position="639"/>
        <end position="649"/>
    </location>
</feature>
<feature type="strand" evidence="13">
    <location>
        <begin position="657"/>
        <end position="661"/>
    </location>
</feature>
<feature type="helix" evidence="13">
    <location>
        <begin position="663"/>
        <end position="672"/>
    </location>
</feature>
<feature type="strand" evidence="13">
    <location>
        <begin position="678"/>
        <end position="695"/>
    </location>
</feature>
<feature type="helix" evidence="13">
    <location>
        <begin position="696"/>
        <end position="698"/>
    </location>
</feature>
<feature type="strand" evidence="13">
    <location>
        <begin position="706"/>
        <end position="712"/>
    </location>
</feature>
<feature type="helix" evidence="13">
    <location>
        <begin position="715"/>
        <end position="717"/>
    </location>
</feature>
<feature type="turn" evidence="13">
    <location>
        <begin position="718"/>
        <end position="727"/>
    </location>
</feature>
<feature type="helix" evidence="13">
    <location>
        <begin position="730"/>
        <end position="737"/>
    </location>
</feature>
<feature type="strand" evidence="13">
    <location>
        <begin position="739"/>
        <end position="741"/>
    </location>
</feature>
<feature type="helix" evidence="13">
    <location>
        <begin position="748"/>
        <end position="750"/>
    </location>
</feature>
<feature type="helix" evidence="13">
    <location>
        <begin position="753"/>
        <end position="769"/>
    </location>
</feature>
<feature type="helix" evidence="13">
    <location>
        <begin position="774"/>
        <end position="776"/>
    </location>
</feature>
<feature type="helix" evidence="13">
    <location>
        <begin position="780"/>
        <end position="783"/>
    </location>
</feature>
<feature type="helix" evidence="13">
    <location>
        <begin position="790"/>
        <end position="796"/>
    </location>
</feature>
<feature type="helix" evidence="13">
    <location>
        <begin position="803"/>
        <end position="811"/>
    </location>
</feature>
<feature type="turn" evidence="13">
    <location>
        <begin position="812"/>
        <end position="814"/>
    </location>
</feature>
<feature type="helix" evidence="13">
    <location>
        <begin position="819"/>
        <end position="854"/>
    </location>
</feature>
<feature type="strand" evidence="13">
    <location>
        <begin position="858"/>
        <end position="867"/>
    </location>
</feature>
<feature type="helix" evidence="13">
    <location>
        <begin position="869"/>
        <end position="873"/>
    </location>
</feature>
<feature type="helix" evidence="13">
    <location>
        <begin position="877"/>
        <end position="888"/>
    </location>
</feature>
<feature type="strand" evidence="13">
    <location>
        <begin position="892"/>
        <end position="898"/>
    </location>
</feature>
<feature type="helix" evidence="13">
    <location>
        <begin position="903"/>
        <end position="918"/>
    </location>
</feature>
<keyword id="KW-0002">3D-structure</keyword>
<keyword id="KW-0021">Allosteric enzyme</keyword>
<keyword id="KW-0067">ATP-binding</keyword>
<keyword id="KW-0324">Glycolysis</keyword>
<keyword id="KW-0418">Kinase</keyword>
<keyword id="KW-0547">Nucleotide-binding</keyword>
<keyword id="KW-1267">Proteomics identification</keyword>
<keyword id="KW-1185">Reference proteome</keyword>
<keyword id="KW-0677">Repeat</keyword>
<keyword id="KW-0808">Transferase</keyword>
<gene>
    <name evidence="11" type="primary">HK3</name>
</gene>